<comment type="catalytic activity">
    <reaction evidence="2">
        <text>orotidine 5'-phosphate + H(+) = UMP + CO2</text>
        <dbReference type="Rhea" id="RHEA:11596"/>
        <dbReference type="ChEBI" id="CHEBI:15378"/>
        <dbReference type="ChEBI" id="CHEBI:16526"/>
        <dbReference type="ChEBI" id="CHEBI:57538"/>
        <dbReference type="ChEBI" id="CHEBI:57865"/>
        <dbReference type="EC" id="4.1.1.23"/>
    </reaction>
</comment>
<comment type="pathway">
    <text>Pyrimidine metabolism; UMP biosynthesis via de novo pathway; UMP from orotate: step 2/2.</text>
</comment>
<comment type="similarity">
    <text evidence="4">Belongs to the OMP decarboxylase family.</text>
</comment>
<feature type="chain" id="PRO_0000134688" description="Orotidine 5'-phosphate decarboxylase">
    <location>
        <begin position="1"/>
        <end position="381"/>
    </location>
</feature>
<feature type="region of interest" description="Disordered" evidence="3">
    <location>
        <begin position="311"/>
        <end position="333"/>
    </location>
</feature>
<feature type="active site" description="Proton donor" evidence="2">
    <location>
        <position position="101"/>
    </location>
</feature>
<feature type="binding site" evidence="1">
    <location>
        <position position="42"/>
    </location>
    <ligand>
        <name>substrate</name>
    </ligand>
</feature>
<feature type="binding site" evidence="1">
    <location>
        <begin position="64"/>
        <end position="66"/>
    </location>
    <ligand>
        <name>substrate</name>
    </ligand>
</feature>
<feature type="binding site" evidence="1">
    <location>
        <begin position="99"/>
        <end position="108"/>
    </location>
    <ligand>
        <name>substrate</name>
    </ligand>
</feature>
<feature type="binding site" evidence="1">
    <location>
        <position position="333"/>
    </location>
    <ligand>
        <name>substrate</name>
    </ligand>
</feature>
<feature type="binding site" evidence="1">
    <location>
        <position position="352"/>
    </location>
    <ligand>
        <name>substrate</name>
    </ligand>
</feature>
<gene>
    <name type="primary">ura3</name>
</gene>
<evidence type="ECO:0000250" key="1"/>
<evidence type="ECO:0000255" key="2">
    <source>
        <dbReference type="PROSITE-ProRule" id="PRU10110"/>
    </source>
</evidence>
<evidence type="ECO:0000256" key="3">
    <source>
        <dbReference type="SAM" id="MobiDB-lite"/>
    </source>
</evidence>
<evidence type="ECO:0000305" key="4"/>
<sequence>MAPHPTLKATFAARSETATHPLTAYLFKLMDLKASNLCLSADVPTARELLYLADKIGPSIVVLKTHYDMVSGWTSHPETGTGAQLASLARKHGFLIFEDRKFGDIGHTVELQYTGGSARIIDWAHIVNVNMVPGKASVASLAQGAKRWLERYPCEVKTSVTVGTPTMDSFDDDADSRDAEPAGAVNGMGSIGVLDKPIYSNRSGDGRKGSIVSITTVTQQYESVSSPRLTKAIAEGDESLFPGIEEAPLSRGLLILAQMSSQGNFMNKEYTQASVEAAREHKDFVMGFISQETLNTEPDDAFIHMTPGCQLPPEDEDQQTNGSVGGDGQGQQYNTPHKLIGIAGSDIAIVGRGILKASDPVEEAERYRSAAWKAYTERLLR</sequence>
<organism>
    <name type="scientific">Hypocrea jecorina</name>
    <name type="common">Trichoderma reesei</name>
    <dbReference type="NCBI Taxonomy" id="51453"/>
    <lineage>
        <taxon>Eukaryota</taxon>
        <taxon>Fungi</taxon>
        <taxon>Dikarya</taxon>
        <taxon>Ascomycota</taxon>
        <taxon>Pezizomycotina</taxon>
        <taxon>Sordariomycetes</taxon>
        <taxon>Hypocreomycetidae</taxon>
        <taxon>Hypocreales</taxon>
        <taxon>Hypocreaceae</taxon>
        <taxon>Trichoderma</taxon>
    </lineage>
</organism>
<proteinExistence type="inferred from homology"/>
<name>PYRF_HYPJE</name>
<reference key="1">
    <citation type="journal article" date="1990" name="Nucleic Acids Res.">
        <title>Nucleotide sequences of the Trichoderma reesei ura3 (OMPdecase) and ura5 (OPRTase) genes.</title>
        <authorList>
            <person name="Berges T."/>
            <person name="Perrot M."/>
            <person name="Barreau C."/>
        </authorList>
    </citation>
    <scope>NUCLEOTIDE SEQUENCE [GENOMIC DNA]</scope>
    <source>
        <strain>ATCC 26921 / CBS 392.92 / QM9414</strain>
    </source>
</reference>
<reference key="2">
    <citation type="journal article" date="1991" name="Curr. Genet.">
        <title>Isolation of uridine auxotrophs from Trichoderma reesei and efficient transformation with the cloned ura3 and ura5 genes.</title>
        <authorList>
            <person name="Berges T."/>
            <person name="Barreau C."/>
        </authorList>
    </citation>
    <scope>NUCLEOTIDE SEQUENCE [GENOMIC DNA]</scope>
    <source>
        <strain>ATCC 26921 / CBS 392.92 / QM9414</strain>
    </source>
</reference>
<protein>
    <recommendedName>
        <fullName>Orotidine 5'-phosphate decarboxylase</fullName>
        <ecNumber>4.1.1.23</ecNumber>
    </recommendedName>
    <alternativeName>
        <fullName>OMP decarboxylase</fullName>
        <shortName>OMPDCase</shortName>
        <shortName>OMPdecase</shortName>
    </alternativeName>
    <alternativeName>
        <fullName>Uridine 5'-monophosphate synthase</fullName>
        <shortName>UMP synthase</shortName>
    </alternativeName>
</protein>
<accession>P21594</accession>
<keyword id="KW-0210">Decarboxylase</keyword>
<keyword id="KW-0456">Lyase</keyword>
<keyword id="KW-0665">Pyrimidine biosynthesis</keyword>
<dbReference type="EC" id="4.1.1.23"/>
<dbReference type="EMBL" id="X55880">
    <property type="protein sequence ID" value="CAA39365.1"/>
    <property type="molecule type" value="Genomic_DNA"/>
</dbReference>
<dbReference type="PIR" id="S14132">
    <property type="entry name" value="S14132"/>
</dbReference>
<dbReference type="SMR" id="P21594"/>
<dbReference type="UniPathway" id="UPA00070">
    <property type="reaction ID" value="UER00120"/>
</dbReference>
<dbReference type="GO" id="GO:0005829">
    <property type="term" value="C:cytosol"/>
    <property type="evidence" value="ECO:0007669"/>
    <property type="project" value="TreeGrafter"/>
</dbReference>
<dbReference type="GO" id="GO:0004590">
    <property type="term" value="F:orotidine-5'-phosphate decarboxylase activity"/>
    <property type="evidence" value="ECO:0007669"/>
    <property type="project" value="UniProtKB-EC"/>
</dbReference>
<dbReference type="GO" id="GO:0006207">
    <property type="term" value="P:'de novo' pyrimidine nucleobase biosynthetic process"/>
    <property type="evidence" value="ECO:0007669"/>
    <property type="project" value="InterPro"/>
</dbReference>
<dbReference type="GO" id="GO:0044205">
    <property type="term" value="P:'de novo' UMP biosynthetic process"/>
    <property type="evidence" value="ECO:0007669"/>
    <property type="project" value="UniProtKB-UniPathway"/>
</dbReference>
<dbReference type="CDD" id="cd04725">
    <property type="entry name" value="OMP_decarboxylase_like"/>
    <property type="match status" value="1"/>
</dbReference>
<dbReference type="Gene3D" id="3.20.20.70">
    <property type="entry name" value="Aldolase class I"/>
    <property type="match status" value="2"/>
</dbReference>
<dbReference type="InterPro" id="IPR013785">
    <property type="entry name" value="Aldolase_TIM"/>
</dbReference>
<dbReference type="InterPro" id="IPR014732">
    <property type="entry name" value="OMPdecase"/>
</dbReference>
<dbReference type="InterPro" id="IPR018089">
    <property type="entry name" value="OMPdecase_AS"/>
</dbReference>
<dbReference type="InterPro" id="IPR001754">
    <property type="entry name" value="OMPdeCOase_dom"/>
</dbReference>
<dbReference type="InterPro" id="IPR011060">
    <property type="entry name" value="RibuloseP-bd_barrel"/>
</dbReference>
<dbReference type="PANTHER" id="PTHR32119">
    <property type="entry name" value="OROTIDINE 5'-PHOSPHATE DECARBOXYLASE"/>
    <property type="match status" value="1"/>
</dbReference>
<dbReference type="PANTHER" id="PTHR32119:SF2">
    <property type="entry name" value="OROTIDINE 5'-PHOSPHATE DECARBOXYLASE"/>
    <property type="match status" value="1"/>
</dbReference>
<dbReference type="Pfam" id="PF00215">
    <property type="entry name" value="OMPdecase"/>
    <property type="match status" value="2"/>
</dbReference>
<dbReference type="SMART" id="SM00934">
    <property type="entry name" value="OMPdecase"/>
    <property type="match status" value="1"/>
</dbReference>
<dbReference type="SUPFAM" id="SSF51366">
    <property type="entry name" value="Ribulose-phoshate binding barrel"/>
    <property type="match status" value="1"/>
</dbReference>
<dbReference type="PROSITE" id="PS00156">
    <property type="entry name" value="OMPDECASE"/>
    <property type="match status" value="1"/>
</dbReference>